<gene>
    <name evidence="7" type="primary">orsE</name>
    <name type="ORF">AN7914</name>
</gene>
<feature type="chain" id="PRO_0000438581" description="Dehydrogenase orsE">
    <location>
        <begin position="1"/>
        <end position="348"/>
    </location>
</feature>
<feature type="binding site" evidence="1">
    <location>
        <begin position="43"/>
        <end position="46"/>
    </location>
    <ligand>
        <name>NADP(+)</name>
        <dbReference type="ChEBI" id="CHEBI:58349"/>
    </ligand>
</feature>
<feature type="binding site" evidence="2">
    <location>
        <begin position="130"/>
        <end position="137"/>
    </location>
    <ligand>
        <name>substrate</name>
    </ligand>
</feature>
<feature type="binding site" evidence="1">
    <location>
        <begin position="180"/>
        <end position="183"/>
    </location>
    <ligand>
        <name>NADP(+)</name>
        <dbReference type="ChEBI" id="CHEBI:58349"/>
    </ligand>
</feature>
<feature type="binding site" evidence="1">
    <location>
        <begin position="203"/>
        <end position="206"/>
    </location>
    <ligand>
        <name>NADP(+)</name>
        <dbReference type="ChEBI" id="CHEBI:58349"/>
    </ligand>
</feature>
<feature type="binding site" evidence="1">
    <location>
        <begin position="272"/>
        <end position="273"/>
    </location>
    <ligand>
        <name>NADP(+)</name>
        <dbReference type="ChEBI" id="CHEBI:58349"/>
    </ligand>
</feature>
<feature type="binding site" evidence="2">
    <location>
        <begin position="292"/>
        <end position="296"/>
    </location>
    <ligand>
        <name>substrate</name>
    </ligand>
</feature>
<feature type="binding site" evidence="1">
    <location>
        <begin position="339"/>
        <end position="340"/>
    </location>
    <ligand>
        <name>NADP(+)</name>
        <dbReference type="ChEBI" id="CHEBI:58349"/>
    </ligand>
</feature>
<proteinExistence type="evidence at transcript level"/>
<accession>Q5AUW6</accession>
<accession>C8V4V4</accession>
<comment type="function">
    <text evidence="3 4">Dehydrogenase; part of the gene cluster that mediates the biosynthesis of orsellinic acid, as well as of the cathepsin K inhibitors F9775 A and F9775 B (PubMed:19666480, PubMed:20174687). The non-reducing polyketide synthase orsA produces orsellinic acid by condensing acetyl-CoA with 3 malonyl-CoA units (PubMed:19666480, PubMed:20174687). Further modifications by the decarboxylase orsB and the tyrosinase-like protein orsC lead to the production of F9775 A and F9775 B (PubMed:20174687). The functions of orsD and orsE remain unclear since only orsB and orsC are required to convert orsellinic acid into F9775 A and F9775 B (PubMed:20174687).</text>
</comment>
<comment type="subunit">
    <text evidence="1">Monomer.</text>
</comment>
<comment type="induction">
    <text evidence="3 5 6">Expression is induced by an intimate physical interaction of the fungal mycelia with the bacterium Streptomyces hygroscopicus (PubMed:19666480). Expression is repressed by VeA and MvlA via histone 3 acetylation by the SAGA/ADA complex (PubMed:23841751, PubMed:23892751).</text>
</comment>
<comment type="similarity">
    <text evidence="9">Belongs to the zinc-containing alcohol dehydrogenase family.</text>
</comment>
<sequence>MATNQAAWLTKAGNDLEVGDAPVPTAGPGEIVVKNAAVAINPLDTHMQDVGVFVQQWPTIFGCDVAGTVHETGPDVERFKKGDRVIGHAINLVTGRPQDGAYALYTVVPANKAAILPDAISFTDGVVAPFAVEAAVCVLSLKEPGVAMPGVSTPALALPYPSLDDPVKPLGKVLVIWGGSSSVGSMTTQIATAAGIQVIAISGAHNFELSKRCGATEVFDHKDPEVVDKVVAAVQKSGQEFVGIFDAVATPDTYTSDLVILEKLGGGHLAAVHPPPAEVPSNVKAGMIFAVNDIATPVWNDFVTPALESGKIQCLPPPTIVGKGLEAINEGLKRCKAGVSATKLVVEL</sequence>
<protein>
    <recommendedName>
        <fullName evidence="8">Dehydrogenase orsE</fullName>
        <ecNumber evidence="9">1.-.-.-</ecNumber>
    </recommendedName>
    <alternativeName>
        <fullName evidence="9">Enoyl reductase orsE</fullName>
    </alternativeName>
    <alternativeName>
        <fullName evidence="7">Orsellinic acid/F9775 biosynthesis cluster protein E</fullName>
    </alternativeName>
</protein>
<reference key="1">
    <citation type="journal article" date="2005" name="Nature">
        <title>Sequencing of Aspergillus nidulans and comparative analysis with A. fumigatus and A. oryzae.</title>
        <authorList>
            <person name="Galagan J.E."/>
            <person name="Calvo S.E."/>
            <person name="Cuomo C."/>
            <person name="Ma L.-J."/>
            <person name="Wortman J.R."/>
            <person name="Batzoglou S."/>
            <person name="Lee S.-I."/>
            <person name="Bastuerkmen M."/>
            <person name="Spevak C.C."/>
            <person name="Clutterbuck J."/>
            <person name="Kapitonov V."/>
            <person name="Jurka J."/>
            <person name="Scazzocchio C."/>
            <person name="Farman M.L."/>
            <person name="Butler J."/>
            <person name="Purcell S."/>
            <person name="Harris S."/>
            <person name="Braus G.H."/>
            <person name="Draht O."/>
            <person name="Busch S."/>
            <person name="D'Enfert C."/>
            <person name="Bouchier C."/>
            <person name="Goldman G.H."/>
            <person name="Bell-Pedersen D."/>
            <person name="Griffiths-Jones S."/>
            <person name="Doonan J.H."/>
            <person name="Yu J."/>
            <person name="Vienken K."/>
            <person name="Pain A."/>
            <person name="Freitag M."/>
            <person name="Selker E.U."/>
            <person name="Archer D.B."/>
            <person name="Penalva M.A."/>
            <person name="Oakley B.R."/>
            <person name="Momany M."/>
            <person name="Tanaka T."/>
            <person name="Kumagai T."/>
            <person name="Asai K."/>
            <person name="Machida M."/>
            <person name="Nierman W.C."/>
            <person name="Denning D.W."/>
            <person name="Caddick M.X."/>
            <person name="Hynes M."/>
            <person name="Paoletti M."/>
            <person name="Fischer R."/>
            <person name="Miller B.L."/>
            <person name="Dyer P.S."/>
            <person name="Sachs M.S."/>
            <person name="Osmani S.A."/>
            <person name="Birren B.W."/>
        </authorList>
    </citation>
    <scope>NUCLEOTIDE SEQUENCE [LARGE SCALE GENOMIC DNA]</scope>
    <source>
        <strain>FGSC A4 / ATCC 38163 / CBS 112.46 / NRRL 194 / M139</strain>
    </source>
</reference>
<reference key="2">
    <citation type="journal article" date="2009" name="Fungal Genet. Biol.">
        <title>The 2008 update of the Aspergillus nidulans genome annotation: a community effort.</title>
        <authorList>
            <person name="Wortman J.R."/>
            <person name="Gilsenan J.M."/>
            <person name="Joardar V."/>
            <person name="Deegan J."/>
            <person name="Clutterbuck J."/>
            <person name="Andersen M.R."/>
            <person name="Archer D."/>
            <person name="Bencina M."/>
            <person name="Braus G."/>
            <person name="Coutinho P."/>
            <person name="von Dohren H."/>
            <person name="Doonan J."/>
            <person name="Driessen A.J."/>
            <person name="Durek P."/>
            <person name="Espeso E."/>
            <person name="Fekete E."/>
            <person name="Flipphi M."/>
            <person name="Estrada C.G."/>
            <person name="Geysens S."/>
            <person name="Goldman G."/>
            <person name="de Groot P.W."/>
            <person name="Hansen K."/>
            <person name="Harris S.D."/>
            <person name="Heinekamp T."/>
            <person name="Helmstaedt K."/>
            <person name="Henrissat B."/>
            <person name="Hofmann G."/>
            <person name="Homan T."/>
            <person name="Horio T."/>
            <person name="Horiuchi H."/>
            <person name="James S."/>
            <person name="Jones M."/>
            <person name="Karaffa L."/>
            <person name="Karanyi Z."/>
            <person name="Kato M."/>
            <person name="Keller N."/>
            <person name="Kelly D.E."/>
            <person name="Kiel J.A."/>
            <person name="Kim J.M."/>
            <person name="van der Klei I.J."/>
            <person name="Klis F.M."/>
            <person name="Kovalchuk A."/>
            <person name="Krasevec N."/>
            <person name="Kubicek C.P."/>
            <person name="Liu B."/>
            <person name="Maccabe A."/>
            <person name="Meyer V."/>
            <person name="Mirabito P."/>
            <person name="Miskei M."/>
            <person name="Mos M."/>
            <person name="Mullins J."/>
            <person name="Nelson D.R."/>
            <person name="Nielsen J."/>
            <person name="Oakley B.R."/>
            <person name="Osmani S.A."/>
            <person name="Pakula T."/>
            <person name="Paszewski A."/>
            <person name="Paulsen I."/>
            <person name="Pilsyk S."/>
            <person name="Pocsi I."/>
            <person name="Punt P.J."/>
            <person name="Ram A.F."/>
            <person name="Ren Q."/>
            <person name="Robellet X."/>
            <person name="Robson G."/>
            <person name="Seiboth B."/>
            <person name="van Solingen P."/>
            <person name="Specht T."/>
            <person name="Sun J."/>
            <person name="Taheri-Talesh N."/>
            <person name="Takeshita N."/>
            <person name="Ussery D."/>
            <person name="vanKuyk P.A."/>
            <person name="Visser H."/>
            <person name="van de Vondervoort P.J."/>
            <person name="de Vries R.P."/>
            <person name="Walton J."/>
            <person name="Xiang X."/>
            <person name="Xiong Y."/>
            <person name="Zeng A.P."/>
            <person name="Brandt B.W."/>
            <person name="Cornell M.J."/>
            <person name="van den Hondel C.A."/>
            <person name="Visser J."/>
            <person name="Oliver S.G."/>
            <person name="Turner G."/>
        </authorList>
    </citation>
    <scope>GENOME REANNOTATION</scope>
    <source>
        <strain>FGSC A4 / ATCC 38163 / CBS 112.46 / NRRL 194 / M139</strain>
    </source>
</reference>
<reference key="3">
    <citation type="journal article" date="2009" name="Proc. Natl. Acad. Sci. U.S.A.">
        <title>Intimate bacterial-fungal interaction triggers biosynthesis of archetypal polyketides in Aspergillus nidulans.</title>
        <authorList>
            <person name="Schroeckh V."/>
            <person name="Scherlach K."/>
            <person name="Nuetzmann H.W."/>
            <person name="Shelest E."/>
            <person name="Schmidt-Heck W."/>
            <person name="Schuemann J."/>
            <person name="Martin K."/>
            <person name="Hertweck C."/>
            <person name="Brakhage A.A."/>
        </authorList>
    </citation>
    <scope>IDENTIFICATION OF THE ORS CLUSTER</scope>
    <scope>FUNCTION</scope>
    <scope>INDUCTION</scope>
</reference>
<reference key="4">
    <citation type="journal article" date="2010" name="Mol. Biosyst.">
        <title>Molecular genetic analysis of the orsellinic acid/F9775 gene cluster of Aspergillus nidulans.</title>
        <authorList>
            <person name="Sanchez J.F."/>
            <person name="Chiang Y.M."/>
            <person name="Szewczyk E."/>
            <person name="Davidson A.D."/>
            <person name="Ahuja M."/>
            <person name="Elizabeth Oakley C."/>
            <person name="Woo Bok J."/>
            <person name="Keller N."/>
            <person name="Oakley B.R."/>
            <person name="Wang C.C."/>
        </authorList>
    </citation>
    <scope>FUNCTION</scope>
</reference>
<reference key="5">
    <citation type="journal article" date="2013" name="Appl. Environ. Microbiol.">
        <title>Distinct amino acids of histone H3 control secondary metabolism in Aspergillus nidulans.</title>
        <authorList>
            <person name="Nuetzmann H.W."/>
            <person name="Fischer J."/>
            <person name="Scherlach K."/>
            <person name="Hertweck C."/>
            <person name="Brakhage A.A."/>
        </authorList>
    </citation>
    <scope>INDUCTION</scope>
</reference>
<reference key="6">
    <citation type="journal article" date="2013" name="Mol. Microbiol.">
        <title>VeA and MvlA repression of the cryptic orsellinic acid gene cluster in Aspergillus nidulans involves histone 3 acetylation.</title>
        <authorList>
            <person name="Bok J.W."/>
            <person name="Soukup A.A."/>
            <person name="Chadwick E."/>
            <person name="Chiang Y.M."/>
            <person name="Wang C.C."/>
            <person name="Keller N.P."/>
        </authorList>
    </citation>
    <scope>INDUCTION</scope>
</reference>
<dbReference type="EC" id="1.-.-.-" evidence="9"/>
<dbReference type="EMBL" id="BN001302">
    <property type="protein sequence ID" value="CBF73513.1"/>
    <property type="molecule type" value="Genomic_DNA"/>
</dbReference>
<dbReference type="EMBL" id="AACD01000135">
    <property type="protein sequence ID" value="EAA59568.1"/>
    <property type="molecule type" value="Genomic_DNA"/>
</dbReference>
<dbReference type="RefSeq" id="XP_681183.1">
    <property type="nucleotide sequence ID" value="XM_676091.1"/>
</dbReference>
<dbReference type="SMR" id="Q5AUW6"/>
<dbReference type="STRING" id="227321.Q5AUW6"/>
<dbReference type="EnsemblFungi" id="CBF73513">
    <property type="protein sequence ID" value="CBF73513"/>
    <property type="gene ID" value="ANIA_07914"/>
</dbReference>
<dbReference type="KEGG" id="ani:ANIA_07914"/>
<dbReference type="VEuPathDB" id="FungiDB:AN7914"/>
<dbReference type="eggNOG" id="KOG1198">
    <property type="taxonomic scope" value="Eukaryota"/>
</dbReference>
<dbReference type="HOGENOM" id="CLU_026673_16_5_1"/>
<dbReference type="InParanoid" id="Q5AUW6"/>
<dbReference type="OMA" id="LDCHMQD"/>
<dbReference type="OrthoDB" id="48317at2759"/>
<dbReference type="Proteomes" id="UP000000560">
    <property type="component" value="Chromosome II"/>
</dbReference>
<dbReference type="GO" id="GO:0005829">
    <property type="term" value="C:cytosol"/>
    <property type="evidence" value="ECO:0000318"/>
    <property type="project" value="GO_Central"/>
</dbReference>
<dbReference type="GO" id="GO:0035925">
    <property type="term" value="F:mRNA 3'-UTR AU-rich region binding"/>
    <property type="evidence" value="ECO:0000318"/>
    <property type="project" value="GO_Central"/>
</dbReference>
<dbReference type="GO" id="GO:0070402">
    <property type="term" value="F:NADPH binding"/>
    <property type="evidence" value="ECO:0000318"/>
    <property type="project" value="GO_Central"/>
</dbReference>
<dbReference type="GO" id="GO:0003960">
    <property type="term" value="F:NADPH:quinone reductase activity"/>
    <property type="evidence" value="ECO:0000318"/>
    <property type="project" value="GO_Central"/>
</dbReference>
<dbReference type="GO" id="GO:0019748">
    <property type="term" value="P:secondary metabolic process"/>
    <property type="evidence" value="ECO:0000270"/>
    <property type="project" value="AspGD"/>
</dbReference>
<dbReference type="CDD" id="cd08249">
    <property type="entry name" value="enoyl_reductase_like"/>
    <property type="match status" value="1"/>
</dbReference>
<dbReference type="Gene3D" id="3.90.180.10">
    <property type="entry name" value="Medium-chain alcohol dehydrogenases, catalytic domain"/>
    <property type="match status" value="1"/>
</dbReference>
<dbReference type="Gene3D" id="3.40.50.720">
    <property type="entry name" value="NAD(P)-binding Rossmann-like Domain"/>
    <property type="match status" value="1"/>
</dbReference>
<dbReference type="InterPro" id="IPR013149">
    <property type="entry name" value="ADH-like_C"/>
</dbReference>
<dbReference type="InterPro" id="IPR013154">
    <property type="entry name" value="ADH-like_N"/>
</dbReference>
<dbReference type="InterPro" id="IPR011032">
    <property type="entry name" value="GroES-like_sf"/>
</dbReference>
<dbReference type="InterPro" id="IPR036291">
    <property type="entry name" value="NAD(P)-bd_dom_sf"/>
</dbReference>
<dbReference type="InterPro" id="IPR020843">
    <property type="entry name" value="PKS_ER"/>
</dbReference>
<dbReference type="InterPro" id="IPR047122">
    <property type="entry name" value="Trans-enoyl_RdTase-like"/>
</dbReference>
<dbReference type="PANTHER" id="PTHR45348">
    <property type="entry name" value="HYPOTHETICAL OXIDOREDUCTASE (EUROFUNG)"/>
    <property type="match status" value="1"/>
</dbReference>
<dbReference type="PANTHER" id="PTHR45348:SF2">
    <property type="entry name" value="ZINC-TYPE ALCOHOL DEHYDROGENASE-LIKE PROTEIN C2E1P3.01"/>
    <property type="match status" value="1"/>
</dbReference>
<dbReference type="Pfam" id="PF08240">
    <property type="entry name" value="ADH_N"/>
    <property type="match status" value="1"/>
</dbReference>
<dbReference type="Pfam" id="PF00107">
    <property type="entry name" value="ADH_zinc_N"/>
    <property type="match status" value="1"/>
</dbReference>
<dbReference type="SMART" id="SM00829">
    <property type="entry name" value="PKS_ER"/>
    <property type="match status" value="1"/>
</dbReference>
<dbReference type="SUPFAM" id="SSF50129">
    <property type="entry name" value="GroES-like"/>
    <property type="match status" value="1"/>
</dbReference>
<dbReference type="SUPFAM" id="SSF51735">
    <property type="entry name" value="NAD(P)-binding Rossmann-fold domains"/>
    <property type="match status" value="1"/>
</dbReference>
<organism>
    <name type="scientific">Emericella nidulans (strain FGSC A4 / ATCC 38163 / CBS 112.46 / NRRL 194 / M139)</name>
    <name type="common">Aspergillus nidulans</name>
    <dbReference type="NCBI Taxonomy" id="227321"/>
    <lineage>
        <taxon>Eukaryota</taxon>
        <taxon>Fungi</taxon>
        <taxon>Dikarya</taxon>
        <taxon>Ascomycota</taxon>
        <taxon>Pezizomycotina</taxon>
        <taxon>Eurotiomycetes</taxon>
        <taxon>Eurotiomycetidae</taxon>
        <taxon>Eurotiales</taxon>
        <taxon>Aspergillaceae</taxon>
        <taxon>Aspergillus</taxon>
        <taxon>Aspergillus subgen. Nidulantes</taxon>
    </lineage>
</organism>
<keyword id="KW-0521">NADP</keyword>
<keyword id="KW-0547">Nucleotide-binding</keyword>
<keyword id="KW-0560">Oxidoreductase</keyword>
<keyword id="KW-1185">Reference proteome</keyword>
<evidence type="ECO:0000250" key="1">
    <source>
        <dbReference type="UniProtKB" id="Q9Y7D0"/>
    </source>
</evidence>
<evidence type="ECO:0000255" key="2"/>
<evidence type="ECO:0000269" key="3">
    <source>
    </source>
</evidence>
<evidence type="ECO:0000269" key="4">
    <source>
    </source>
</evidence>
<evidence type="ECO:0000269" key="5">
    <source>
    </source>
</evidence>
<evidence type="ECO:0000269" key="6">
    <source>
    </source>
</evidence>
<evidence type="ECO:0000303" key="7">
    <source>
    </source>
</evidence>
<evidence type="ECO:0000303" key="8">
    <source>
    </source>
</evidence>
<evidence type="ECO:0000305" key="9"/>
<name>ORSE_EMENI</name>